<sequence length="746" mass="84138">MGDVLSTHLDDARRQHIAEKTGKILTEFLQFYEDQYGVALFNSMRHEIEGTGLPQAQLLWRKVPLDERIVFSGNLFQHQEDSKKWRNRFSLVPHNYGLVLYENKAAYERQVPPRAVINSAGYKILTSVDQYLELIGNSLPGTTAKSGSAPILKCPTQFPLILWHPYARHYYFCMMTEAEQDKWQAVLQDCIRHCNNGIPEDSKVEGPAFTDAIRMYRQSKELYGTWEMLCGNEVQILSNLVMEELGPELKAELGPRLKGKPQERQRQWIQISDAVYHMVYEQAKARFEEVLSKVQQVQPAMQAVIRTDMDQIITSKEHLASKIRAFILPKAEVCVRNHVQPYIPSILEALMVPTSQGFTEVRDVFFKEVTDMNLNVINEGGIDKLGEYMEKLSRLAYHPLKMQSCYEKMESLRLDGLQQRFDVSSTSVFKQRAQIHMREQMDNAVYTFETLLHQELGKGPTKEELCKSIQRVLERVLKKYDYDSSSVRKRFFREALLQISIPFLLKKLAPTCKSELPRFQELIFEDFARFILVENTYEEVVLQTVMKDILQAVKEAAVQRKHNLYRDSMVMHNSDPNLHLLAEGAPIDWGEEYSNSGGGGSPSPSTPESATLSEKRRRAKQVVSVVQDEEVGLPFEASPESPPPASPDGVTEIRGLLAQGLRPESPPPAGPLLNGAPAGESPQPKAAPEASSPPASPLQHLLPGKAVDLGPPKPSDQETGEQVSSPSSHPALHTTTEDSAGVQTEF</sequence>
<name>NIBA2_HUMAN</name>
<reference key="1">
    <citation type="submission" date="1999-05" db="EMBL/GenBank/DDBJ databases">
        <title>Homo sapiens meg-3 mRNA, complete cds.</title>
        <authorList>
            <person name="Miyata T."/>
            <person name="Inagi R."/>
            <person name="Yasuda Y."/>
            <person name="Kurokawa K."/>
        </authorList>
    </citation>
    <scope>NUCLEOTIDE SEQUENCE [MRNA] (ISOFORM 2)</scope>
</reference>
<reference key="2">
    <citation type="submission" date="1999-10" db="EMBL/GenBank/DDBJ databases">
        <title>Differential screening of human osteoclast maturation associated genes.</title>
        <authorList>
            <person name="Yamane S."/>
            <person name="Toyosaki-Maeda T."/>
            <person name="Tsuruta Y."/>
            <person name="Suzuki R."/>
            <person name="Ochi T."/>
        </authorList>
    </citation>
    <scope>NUCLEOTIDE SEQUENCE [MRNA] (ISOFORM 1)</scope>
</reference>
<reference key="3">
    <citation type="journal article" date="2004" name="Nature">
        <title>DNA sequence and analysis of human chromosome 9.</title>
        <authorList>
            <person name="Humphray S.J."/>
            <person name="Oliver K."/>
            <person name="Hunt A.R."/>
            <person name="Plumb R.W."/>
            <person name="Loveland J.E."/>
            <person name="Howe K.L."/>
            <person name="Andrews T.D."/>
            <person name="Searle S."/>
            <person name="Hunt S.E."/>
            <person name="Scott C.E."/>
            <person name="Jones M.C."/>
            <person name="Ainscough R."/>
            <person name="Almeida J.P."/>
            <person name="Ambrose K.D."/>
            <person name="Ashwell R.I.S."/>
            <person name="Babbage A.K."/>
            <person name="Babbage S."/>
            <person name="Bagguley C.L."/>
            <person name="Bailey J."/>
            <person name="Banerjee R."/>
            <person name="Barker D.J."/>
            <person name="Barlow K.F."/>
            <person name="Bates K."/>
            <person name="Beasley H."/>
            <person name="Beasley O."/>
            <person name="Bird C.P."/>
            <person name="Bray-Allen S."/>
            <person name="Brown A.J."/>
            <person name="Brown J.Y."/>
            <person name="Burford D."/>
            <person name="Burrill W."/>
            <person name="Burton J."/>
            <person name="Carder C."/>
            <person name="Carter N.P."/>
            <person name="Chapman J.C."/>
            <person name="Chen Y."/>
            <person name="Clarke G."/>
            <person name="Clark S.Y."/>
            <person name="Clee C.M."/>
            <person name="Clegg S."/>
            <person name="Collier R.E."/>
            <person name="Corby N."/>
            <person name="Crosier M."/>
            <person name="Cummings A.T."/>
            <person name="Davies J."/>
            <person name="Dhami P."/>
            <person name="Dunn M."/>
            <person name="Dutta I."/>
            <person name="Dyer L.W."/>
            <person name="Earthrowl M.E."/>
            <person name="Faulkner L."/>
            <person name="Fleming C.J."/>
            <person name="Frankish A."/>
            <person name="Frankland J.A."/>
            <person name="French L."/>
            <person name="Fricker D.G."/>
            <person name="Garner P."/>
            <person name="Garnett J."/>
            <person name="Ghori J."/>
            <person name="Gilbert J.G.R."/>
            <person name="Glison C."/>
            <person name="Grafham D.V."/>
            <person name="Gribble S."/>
            <person name="Griffiths C."/>
            <person name="Griffiths-Jones S."/>
            <person name="Grocock R."/>
            <person name="Guy J."/>
            <person name="Hall R.E."/>
            <person name="Hammond S."/>
            <person name="Harley J.L."/>
            <person name="Harrison E.S.I."/>
            <person name="Hart E.A."/>
            <person name="Heath P.D."/>
            <person name="Henderson C.D."/>
            <person name="Hopkins B.L."/>
            <person name="Howard P.J."/>
            <person name="Howden P.J."/>
            <person name="Huckle E."/>
            <person name="Johnson C."/>
            <person name="Johnson D."/>
            <person name="Joy A.A."/>
            <person name="Kay M."/>
            <person name="Keenan S."/>
            <person name="Kershaw J.K."/>
            <person name="Kimberley A.M."/>
            <person name="King A."/>
            <person name="Knights A."/>
            <person name="Laird G.K."/>
            <person name="Langford C."/>
            <person name="Lawlor S."/>
            <person name="Leongamornlert D.A."/>
            <person name="Leversha M."/>
            <person name="Lloyd C."/>
            <person name="Lloyd D.M."/>
            <person name="Lovell J."/>
            <person name="Martin S."/>
            <person name="Mashreghi-Mohammadi M."/>
            <person name="Matthews L."/>
            <person name="McLaren S."/>
            <person name="McLay K.E."/>
            <person name="McMurray A."/>
            <person name="Milne S."/>
            <person name="Nickerson T."/>
            <person name="Nisbett J."/>
            <person name="Nordsiek G."/>
            <person name="Pearce A.V."/>
            <person name="Peck A.I."/>
            <person name="Porter K.M."/>
            <person name="Pandian R."/>
            <person name="Pelan S."/>
            <person name="Phillimore B."/>
            <person name="Povey S."/>
            <person name="Ramsey Y."/>
            <person name="Rand V."/>
            <person name="Scharfe M."/>
            <person name="Sehra H.K."/>
            <person name="Shownkeen R."/>
            <person name="Sims S.K."/>
            <person name="Skuce C.D."/>
            <person name="Smith M."/>
            <person name="Steward C.A."/>
            <person name="Swarbreck D."/>
            <person name="Sycamore N."/>
            <person name="Tester J."/>
            <person name="Thorpe A."/>
            <person name="Tracey A."/>
            <person name="Tromans A."/>
            <person name="Thomas D.W."/>
            <person name="Wall M."/>
            <person name="Wallis J.M."/>
            <person name="West A.P."/>
            <person name="Whitehead S.L."/>
            <person name="Willey D.L."/>
            <person name="Williams S.A."/>
            <person name="Wilming L."/>
            <person name="Wray P.W."/>
            <person name="Young L."/>
            <person name="Ashurst J.L."/>
            <person name="Coulson A."/>
            <person name="Blocker H."/>
            <person name="Durbin R.M."/>
            <person name="Sulston J.E."/>
            <person name="Hubbard T."/>
            <person name="Jackson M.J."/>
            <person name="Bentley D.R."/>
            <person name="Beck S."/>
            <person name="Rogers J."/>
            <person name="Dunham I."/>
        </authorList>
    </citation>
    <scope>NUCLEOTIDE SEQUENCE [LARGE SCALE GENOMIC DNA]</scope>
</reference>
<reference key="4">
    <citation type="submission" date="2005-07" db="EMBL/GenBank/DDBJ databases">
        <authorList>
            <person name="Mural R.J."/>
            <person name="Istrail S."/>
            <person name="Sutton G.G."/>
            <person name="Florea L."/>
            <person name="Halpern A.L."/>
            <person name="Mobarry C.M."/>
            <person name="Lippert R."/>
            <person name="Walenz B."/>
            <person name="Shatkay H."/>
            <person name="Dew I."/>
            <person name="Miller J.R."/>
            <person name="Flanigan M.J."/>
            <person name="Edwards N.J."/>
            <person name="Bolanos R."/>
            <person name="Fasulo D."/>
            <person name="Halldorsson B.V."/>
            <person name="Hannenhalli S."/>
            <person name="Turner R."/>
            <person name="Yooseph S."/>
            <person name="Lu F."/>
            <person name="Nusskern D.R."/>
            <person name="Shue B.C."/>
            <person name="Zheng X.H."/>
            <person name="Zhong F."/>
            <person name="Delcher A.L."/>
            <person name="Huson D.H."/>
            <person name="Kravitz S.A."/>
            <person name="Mouchard L."/>
            <person name="Reinert K."/>
            <person name="Remington K.A."/>
            <person name="Clark A.G."/>
            <person name="Waterman M.S."/>
            <person name="Eichler E.E."/>
            <person name="Adams M.D."/>
            <person name="Hunkapiller M.W."/>
            <person name="Myers E.W."/>
            <person name="Venter J.C."/>
        </authorList>
    </citation>
    <scope>NUCLEOTIDE SEQUENCE [LARGE SCALE GENOMIC DNA]</scope>
</reference>
<reference key="5">
    <citation type="submission" date="2005-03" db="EMBL/GenBank/DDBJ databases">
        <title>Preparation of a set of expression-ready clones of mammalian long cDNAs encoding large proteins by the ORF trap cloning method.</title>
        <authorList>
            <person name="Nakajima D."/>
            <person name="Saito K."/>
            <person name="Yamakawa H."/>
            <person name="Kikuno R.F."/>
            <person name="Nakayama M."/>
            <person name="Ohara R."/>
            <person name="Okazaki N."/>
            <person name="Koga H."/>
            <person name="Nagase T."/>
            <person name="Ohara O."/>
        </authorList>
    </citation>
    <scope>NUCLEOTIDE SEQUENCE [LARGE SCALE MRNA] OF 8-746 (ISOFORM 1)</scope>
</reference>
<reference key="6">
    <citation type="journal article" date="2007" name="BMC Genomics">
        <title>The full-ORF clone resource of the German cDNA consortium.</title>
        <authorList>
            <person name="Bechtel S."/>
            <person name="Rosenfelder H."/>
            <person name="Duda A."/>
            <person name="Schmidt C.P."/>
            <person name="Ernst U."/>
            <person name="Wellenreuther R."/>
            <person name="Mehrle A."/>
            <person name="Schuster C."/>
            <person name="Bahr A."/>
            <person name="Bloecker H."/>
            <person name="Heubner D."/>
            <person name="Hoerlein A."/>
            <person name="Michel G."/>
            <person name="Wedler H."/>
            <person name="Koehrer K."/>
            <person name="Ottenwaelder B."/>
            <person name="Poustka A."/>
            <person name="Wiemann S."/>
            <person name="Schupp I."/>
        </authorList>
    </citation>
    <scope>NUCLEOTIDE SEQUENCE [LARGE SCALE MRNA] OF 38-733</scope>
    <source>
        <tissue>Testis</tissue>
    </source>
</reference>
<reference key="7">
    <citation type="journal article" date="2004" name="Genome Res.">
        <title>The status, quality, and expansion of the NIH full-length cDNA project: the Mammalian Gene Collection (MGC).</title>
        <authorList>
            <consortium name="The MGC Project Team"/>
        </authorList>
    </citation>
    <scope>NUCLEOTIDE SEQUENCE [LARGE SCALE MRNA] OF 278-733</scope>
    <source>
        <tissue>Cervix</tissue>
    </source>
</reference>
<reference key="8">
    <citation type="journal article" date="2009" name="Mol. Cell">
        <title>Functional proteomics identifies targets of phosphorylation by B-Raf signaling in melanoma.</title>
        <authorList>
            <person name="Old W.M."/>
            <person name="Shabb J.B."/>
            <person name="Houel S."/>
            <person name="Wang H."/>
            <person name="Couts K.L."/>
            <person name="Yen C.Y."/>
            <person name="Litman E.S."/>
            <person name="Croy C.H."/>
            <person name="Meyer-Arendt K."/>
            <person name="Miranda J.G."/>
            <person name="Brown R.A."/>
            <person name="Witze E.S."/>
            <person name="Schweppe R.E."/>
            <person name="Resing K.A."/>
            <person name="Ahn N.G."/>
        </authorList>
    </citation>
    <scope>PROTEIN SEQUENCE OF 637-650 AND 688-698</scope>
    <scope>IDENTIFICATION BY MASS SPECTROMETRY</scope>
    <scope>FUNCTION</scope>
    <scope>SUBCELLULAR LOCATION</scope>
    <scope>PHOSPHORYLATION AT SER-641; SER-646; SER-665; SER-681; SER-692 AND SER-696</scope>
    <scope>MUTAGENESIS OF SER-641; SER-646; SER-665; SER-681; SER-692 AND SER-696</scope>
</reference>
<reference key="9">
    <citation type="journal article" date="2006" name="Cell">
        <title>Global, in vivo, and site-specific phosphorylation dynamics in signaling networks.</title>
        <authorList>
            <person name="Olsen J.V."/>
            <person name="Blagoev B."/>
            <person name="Gnad F."/>
            <person name="Macek B."/>
            <person name="Kumar C."/>
            <person name="Mortensen P."/>
            <person name="Mann M."/>
        </authorList>
    </citation>
    <scope>PHOSPHORYLATION [LARGE SCALE ANALYSIS] AT SER-646; SER-665 AND SER-681</scope>
    <scope>IDENTIFICATION BY MASS SPECTROMETRY [LARGE SCALE ANALYSIS]</scope>
    <source>
        <tissue>Cervix carcinoma</tissue>
    </source>
</reference>
<reference key="10">
    <citation type="journal article" date="2008" name="Proc. Natl. Acad. Sci. U.S.A.">
        <title>A quantitative atlas of mitotic phosphorylation.</title>
        <authorList>
            <person name="Dephoure N."/>
            <person name="Zhou C."/>
            <person name="Villen J."/>
            <person name="Beausoleil S.A."/>
            <person name="Bakalarski C.E."/>
            <person name="Elledge S.J."/>
            <person name="Gygi S.P."/>
        </authorList>
    </citation>
    <scope>PHOSPHORYLATION [LARGE SCALE ANALYSIS] AT SER-574; SER-601; SER-603; THR-606; SER-609; SER-638; SER-641; SER-646; SER-692 AND SER-696</scope>
    <scope>IDENTIFICATION BY MASS SPECTROMETRY [LARGE SCALE ANALYSIS]</scope>
    <source>
        <tissue>Cervix carcinoma</tissue>
    </source>
</reference>
<reference key="11">
    <citation type="journal article" date="2009" name="Anal. Chem.">
        <title>Lys-N and trypsin cover complementary parts of the phosphoproteome in a refined SCX-based approach.</title>
        <authorList>
            <person name="Gauci S."/>
            <person name="Helbig A.O."/>
            <person name="Slijper M."/>
            <person name="Krijgsveld J."/>
            <person name="Heck A.J."/>
            <person name="Mohammed S."/>
        </authorList>
    </citation>
    <scope>IDENTIFICATION BY MASS SPECTROMETRY [LARGE SCALE ANALYSIS]</scope>
</reference>
<reference key="12">
    <citation type="journal article" date="2009" name="Sci. Signal.">
        <title>Quantitative phosphoproteomic analysis of T cell receptor signaling reveals system-wide modulation of protein-protein interactions.</title>
        <authorList>
            <person name="Mayya V."/>
            <person name="Lundgren D.H."/>
            <person name="Hwang S.-I."/>
            <person name="Rezaul K."/>
            <person name="Wu L."/>
            <person name="Eng J.K."/>
            <person name="Rodionov V."/>
            <person name="Han D.K."/>
        </authorList>
    </citation>
    <scope>PHOSPHORYLATION [LARGE SCALE ANALYSIS] AT SER-624; SER-641; SER-646; SER-665; SER-692 AND SER-696</scope>
    <scope>IDENTIFICATION BY MASS SPECTROMETRY [LARGE SCALE ANALYSIS]</scope>
    <source>
        <tissue>Leukemic T-cell</tissue>
    </source>
</reference>
<reference key="13">
    <citation type="journal article" date="2010" name="Sci. Signal.">
        <title>Quantitative phosphoproteomics reveals widespread full phosphorylation site occupancy during mitosis.</title>
        <authorList>
            <person name="Olsen J.V."/>
            <person name="Vermeulen M."/>
            <person name="Santamaria A."/>
            <person name="Kumar C."/>
            <person name="Miller M.L."/>
            <person name="Jensen L.J."/>
            <person name="Gnad F."/>
            <person name="Cox J."/>
            <person name="Jensen T.S."/>
            <person name="Nigg E.A."/>
            <person name="Brunak S."/>
            <person name="Mann M."/>
        </authorList>
    </citation>
    <scope>PHOSPHORYLATION [LARGE SCALE ANALYSIS] AT SER-568; SER-646; SER-665 AND SER-681</scope>
    <scope>IDENTIFICATION BY MASS SPECTROMETRY [LARGE SCALE ANALYSIS]</scope>
    <source>
        <tissue>Cervix carcinoma</tissue>
    </source>
</reference>
<reference key="14">
    <citation type="journal article" date="2011" name="BMC Syst. Biol.">
        <title>Initial characterization of the human central proteome.</title>
        <authorList>
            <person name="Burkard T.R."/>
            <person name="Planyavsky M."/>
            <person name="Kaupe I."/>
            <person name="Breitwieser F.P."/>
            <person name="Buerckstuemmer T."/>
            <person name="Bennett K.L."/>
            <person name="Superti-Furga G."/>
            <person name="Colinge J."/>
        </authorList>
    </citation>
    <scope>IDENTIFICATION BY MASS SPECTROMETRY [LARGE SCALE ANALYSIS]</scope>
</reference>
<reference key="15">
    <citation type="journal article" date="2011" name="J. Biol. Chem.">
        <title>FAM129B/MINERVA, a novel adherens junction-associated protein, suppresses apoptosis in HeLa cells.</title>
        <authorList>
            <person name="Chen S."/>
            <person name="Evans H.G."/>
            <person name="Evans D.R."/>
        </authorList>
    </citation>
    <scope>FUNCTION</scope>
    <scope>SUBCELLULAR LOCATION</scope>
</reference>
<reference key="16">
    <citation type="journal article" date="2011" name="Sci. Signal.">
        <title>System-wide temporal characterization of the proteome and phosphoproteome of human embryonic stem cell differentiation.</title>
        <authorList>
            <person name="Rigbolt K.T."/>
            <person name="Prokhorova T.A."/>
            <person name="Akimov V."/>
            <person name="Henningsen J."/>
            <person name="Johansen P.T."/>
            <person name="Kratchmarova I."/>
            <person name="Kassem M."/>
            <person name="Mann M."/>
            <person name="Olsen J.V."/>
            <person name="Blagoev B."/>
        </authorList>
    </citation>
    <scope>PHOSPHORYLATION [LARGE SCALE ANALYSIS] AT SER-665 AND SER-681</scope>
    <scope>IDENTIFICATION BY MASS SPECTROMETRY [LARGE SCALE ANALYSIS]</scope>
</reference>
<reference key="17">
    <citation type="journal article" date="2013" name="J. Proteome Res.">
        <title>Toward a comprehensive characterization of a human cancer cell phosphoproteome.</title>
        <authorList>
            <person name="Zhou H."/>
            <person name="Di Palma S."/>
            <person name="Preisinger C."/>
            <person name="Peng M."/>
            <person name="Polat A.N."/>
            <person name="Heck A.J."/>
            <person name="Mohammed S."/>
        </authorList>
    </citation>
    <scope>PHOSPHORYLATION [LARGE SCALE ANALYSIS] AT SER-665; SER-681; SER-692 AND SER-696</scope>
    <scope>IDENTIFICATION BY MASS SPECTROMETRY [LARGE SCALE ANALYSIS]</scope>
    <source>
        <tissue>Cervix carcinoma</tissue>
        <tissue>Erythroleukemia</tissue>
    </source>
</reference>
<reference key="18">
    <citation type="journal article" date="2014" name="J. Proteomics">
        <title>An enzyme assisted RP-RPLC approach for in-depth analysis of human liver phosphoproteome.</title>
        <authorList>
            <person name="Bian Y."/>
            <person name="Song C."/>
            <person name="Cheng K."/>
            <person name="Dong M."/>
            <person name="Wang F."/>
            <person name="Huang J."/>
            <person name="Sun D."/>
            <person name="Wang L."/>
            <person name="Ye M."/>
            <person name="Zou H."/>
        </authorList>
    </citation>
    <scope>PHOSPHORYLATION [LARGE SCALE ANALYSIS] AT SER-638; SER-646; SER-692 AND SER-696</scope>
    <scope>IDENTIFICATION BY MASS SPECTROMETRY [LARGE SCALE ANALYSIS]</scope>
    <source>
        <tissue>Liver</tissue>
    </source>
</reference>
<reference key="19">
    <citation type="journal article" date="2014" name="Nat. Commun.">
        <title>Global profiling of co- and post-translationally N-myristoylated proteomes in human cells.</title>
        <authorList>
            <person name="Thinon E."/>
            <person name="Serwa R.A."/>
            <person name="Broncel M."/>
            <person name="Brannigan J.A."/>
            <person name="Brassat U."/>
            <person name="Wright M.H."/>
            <person name="Heal W.P."/>
            <person name="Wilkinson A.J."/>
            <person name="Mann D.J."/>
            <person name="Tate E.W."/>
        </authorList>
    </citation>
    <scope>MYRISTOYLATION AT GLY-2</scope>
    <scope>CLEAVAGE OF INITIATOR METHIONINE</scope>
    <scope>IDENTIFICATION BY MASS SPECTROMETRY</scope>
</reference>
<reference key="20">
    <citation type="journal article" date="2015" name="Angew. Chem. Int. Ed.">
        <title>Multifunctional reagents for quantitative proteome-wide analysis of protein modification in human cells and dynamic profiling of protein lipidation during vertebrate development.</title>
        <authorList>
            <person name="Broncel M."/>
            <person name="Serwa R.A."/>
            <person name="Ciepla P."/>
            <person name="Krause E."/>
            <person name="Dallman M.J."/>
            <person name="Magee A.I."/>
            <person name="Tate E.W."/>
        </authorList>
    </citation>
    <scope>MYRISTOYLATION AT GLY-2</scope>
    <scope>CLEAVAGE OF INITIATOR METHIONINE</scope>
    <scope>IDENTIFICATION BY MASS SPECTROMETRY</scope>
</reference>
<comment type="function">
    <text evidence="3 4">May play a role in apoptosis suppression. May promote melanoma cell invasion in vitro.</text>
</comment>
<comment type="interaction">
    <interactant intactId="EBI-2514593">
        <id>Q96TA1</id>
    </interactant>
    <interactant intactId="EBI-751001">
        <id>Q14145</id>
        <label>KEAP1</label>
    </interactant>
    <organismsDiffer>false</organismsDiffer>
    <experiments>9</experiments>
</comment>
<comment type="subcellular location">
    <subcellularLocation>
        <location>Cytoplasm</location>
        <location>Cytosol</location>
    </subcellularLocation>
    <subcellularLocation>
        <location>Cell junction</location>
        <location>Adherens junction</location>
    </subcellularLocation>
    <subcellularLocation>
        <location evidence="9">Membrane</location>
        <topology evidence="9">Lipid-anchor</topology>
    </subcellularLocation>
    <text>In exponentially growing cells, exclusively cytoplasmic. Cell membrane localization is observed when cells reach confluency and during telophase. In melanoma cells, targeting to the plasma membrane may be impaired by C-terminal phosphorylation.</text>
</comment>
<comment type="alternative products">
    <event type="alternative splicing"/>
    <isoform>
        <id>Q96TA1-1</id>
        <name>1</name>
        <sequence type="displayed"/>
    </isoform>
    <isoform>
        <id>Q96TA1-2</id>
        <name>2</name>
        <sequence type="described" ref="VSP_041810"/>
    </isoform>
</comment>
<comment type="PTM">
    <text evidence="3">Phosphorylated at Ser-641, Ser-646, Ser-692 and Ser-696 by the BRAF/MKK/ERK signaling cascade. In melanoma cells, the C-terminal phosphorylation may prevent targeting to the plasma membrane.</text>
</comment>
<comment type="PTM">
    <text evidence="4">As apoptosis proceeds, degraded via an proteasome-independent pathway, probably by caspases.</text>
</comment>
<comment type="similarity">
    <text evidence="9">Belongs to the Niban family.</text>
</comment>
<protein>
    <recommendedName>
        <fullName evidence="9">Protein Niban 2</fullName>
    </recommendedName>
    <alternativeName>
        <fullName>Meg-3</fullName>
    </alternativeName>
    <alternativeName>
        <fullName evidence="7">Melanoma invasion by ERK</fullName>
        <shortName evidence="7">MINERVA</shortName>
    </alternativeName>
    <alternativeName>
        <fullName>Niban-like protein 1</fullName>
    </alternativeName>
    <alternativeName>
        <fullName>Protein FAM129B</fullName>
    </alternativeName>
</protein>
<proteinExistence type="evidence at protein level"/>
<feature type="initiator methionine" description="Removed" evidence="5 6">
    <location>
        <position position="1"/>
    </location>
</feature>
<feature type="chain" id="PRO_0000213121" description="Protein Niban 2">
    <location>
        <begin position="2"/>
        <end position="746"/>
    </location>
</feature>
<feature type="domain" description="PH" evidence="1">
    <location>
        <begin position="68"/>
        <end position="192"/>
    </location>
</feature>
<feature type="region of interest" description="Disordered" evidence="2">
    <location>
        <begin position="590"/>
        <end position="746"/>
    </location>
</feature>
<feature type="compositionally biased region" description="Low complexity" evidence="2">
    <location>
        <begin position="671"/>
        <end position="693"/>
    </location>
</feature>
<feature type="compositionally biased region" description="Polar residues" evidence="2">
    <location>
        <begin position="720"/>
        <end position="746"/>
    </location>
</feature>
<feature type="modified residue" description="Phosphoserine" evidence="14">
    <location>
        <position position="568"/>
    </location>
</feature>
<feature type="modified residue" description="Phosphoserine" evidence="12">
    <location>
        <position position="574"/>
    </location>
</feature>
<feature type="modified residue" description="Phosphoserine" evidence="12">
    <location>
        <position position="601"/>
    </location>
</feature>
<feature type="modified residue" description="Phosphoserine" evidence="12">
    <location>
        <position position="603"/>
    </location>
</feature>
<feature type="modified residue" description="Phosphothreonine" evidence="12">
    <location>
        <position position="606"/>
    </location>
</feature>
<feature type="modified residue" description="Phosphoserine" evidence="12">
    <location>
        <position position="609"/>
    </location>
</feature>
<feature type="modified residue" description="Phosphoserine" evidence="13">
    <location>
        <position position="624"/>
    </location>
</feature>
<feature type="modified residue" description="Phosphoserine" evidence="12 17">
    <location>
        <position position="638"/>
    </location>
</feature>
<feature type="modified residue" description="Phosphoserine" evidence="3 12 13">
    <location>
        <position position="641"/>
    </location>
</feature>
<feature type="modified residue" description="Phosphoserine" evidence="3 11 12 13 14 17">
    <location>
        <position position="646"/>
    </location>
</feature>
<feature type="modified residue" description="Phosphoserine" evidence="3 11 13 14 15 16">
    <location>
        <position position="665"/>
    </location>
</feature>
<feature type="modified residue" description="Phosphoserine" evidence="3 11 14 15 16">
    <location>
        <position position="681"/>
    </location>
</feature>
<feature type="modified residue" description="Phosphoserine" evidence="3 12 13 16 17">
    <location>
        <position position="692"/>
    </location>
</feature>
<feature type="modified residue" description="Phosphoserine" evidence="3 12 13 16 17">
    <location>
        <position position="696"/>
    </location>
</feature>
<feature type="lipid moiety-binding region" description="N-myristoyl glycine" evidence="5 6">
    <location>
        <position position="2"/>
    </location>
</feature>
<feature type="splice variant" id="VSP_041810" description="In isoform 2." evidence="8">
    <original>MGDVLSTHLDDARRQHIA</original>
    <variation>MGWMG</variation>
    <location>
        <begin position="1"/>
        <end position="18"/>
    </location>
</feature>
<feature type="mutagenesis site" description="Loss of melanoma cell invasion; when associated with A-646; A-665; A-681; A-679 and A-683." evidence="3">
    <original>S</original>
    <variation>A</variation>
    <location>
        <position position="641"/>
    </location>
</feature>
<feature type="mutagenesis site" description="Promotes melanoma cell invasion; when associated with D/E-633; D/E-652; D/E-668; D/E-679 and D/E-683." evidence="3">
    <original>S</original>
    <variation>D</variation>
    <variation>E</variation>
    <location>
        <position position="641"/>
    </location>
</feature>
<feature type="mutagenesis site" description="Loss of melanoma cell invasion; when associated with A-641; A-665; A-681; A-679 and A-683." evidence="3">
    <original>S</original>
    <variation>A</variation>
    <location>
        <position position="646"/>
    </location>
</feature>
<feature type="mutagenesis site" description="Promotes melanoma cell invasion; when associated with D/E-628; D/E-652; D/E-668; D/E-679 and D/E-683." evidence="3">
    <original>S</original>
    <variation>D</variation>
    <variation>E</variation>
    <location>
        <position position="646"/>
    </location>
</feature>
<feature type="mutagenesis site" description="Loss of melanoma cell invasion; when associated with A-641; A-646; A-681; A-679 and A-683." evidence="3">
    <original>S</original>
    <variation>A</variation>
    <location>
        <position position="665"/>
    </location>
</feature>
<feature type="mutagenesis site" description="Promotes melanoma cell invasion; when associated with D/E-628; D/E-633; D/E-668; D/E-679 and D/E-683." evidence="3">
    <original>S</original>
    <variation>D</variation>
    <variation>E</variation>
    <location>
        <position position="665"/>
    </location>
</feature>
<feature type="mutagenesis site" description="Loss of melanoma cell invasion; when associated with A-641; A-646; A-665; A-679 and A-683." evidence="3">
    <original>S</original>
    <variation>A</variation>
    <location>
        <position position="681"/>
    </location>
</feature>
<feature type="mutagenesis site" description="Promotes melanoma cell invasion; when associated with D/E-628; D/E-633; D/E-652; D/E-679 and D/E-683." evidence="3">
    <original>S</original>
    <variation>D</variation>
    <variation>E</variation>
    <location>
        <position position="681"/>
    </location>
</feature>
<feature type="mutagenesis site" description="Loss of melanoma cell invasion; when associated with A-641; A-646; A-665; A-668 and A-683." evidence="3">
    <original>S</original>
    <variation>A</variation>
    <location>
        <position position="692"/>
    </location>
</feature>
<feature type="mutagenesis site" description="Promotes melanoma cell invasion; when associated with D/E-628; D/E-633; D/E-652; D/E-668 and D/E-683." evidence="3">
    <original>S</original>
    <variation>D</variation>
    <variation>E</variation>
    <location>
        <position position="692"/>
    </location>
</feature>
<feature type="mutagenesis site" description="Loss of melanoma cell invasion; when associated with A-641; A-646; A-665; A-668 and A-679." evidence="3">
    <original>S</original>
    <variation>A</variation>
    <location>
        <position position="696"/>
    </location>
</feature>
<feature type="mutagenesis site" description="Promotes melanoma cell invasion; when associated with D/E-628; D/E-633; D/E-652; D/E-668 and D/E-679." evidence="3">
    <original>S</original>
    <variation>D</variation>
    <variation>E</variation>
    <location>
        <position position="696"/>
    </location>
</feature>
<feature type="sequence conflict" description="In Ref. 1; AAK57556." evidence="9" ref="1">
    <original>H</original>
    <variation>L</variation>
    <location>
        <position position="318"/>
    </location>
</feature>
<feature type="sequence conflict" description="In Ref. 7; AAH01979." evidence="9" ref="7">
    <original>P</original>
    <variation>L</variation>
    <location>
        <position position="677"/>
    </location>
</feature>
<feature type="helix" evidence="18">
    <location>
        <begin position="4"/>
        <end position="8"/>
    </location>
</feature>
<feature type="helix" evidence="18">
    <location>
        <begin position="11"/>
        <end position="49"/>
    </location>
</feature>
<feature type="strand" evidence="18">
    <location>
        <begin position="71"/>
        <end position="78"/>
    </location>
</feature>
<feature type="turn" evidence="18">
    <location>
        <begin position="80"/>
        <end position="82"/>
    </location>
</feature>
<feature type="strand" evidence="18">
    <location>
        <begin position="85"/>
        <end position="92"/>
    </location>
</feature>
<feature type="strand" evidence="18">
    <location>
        <begin position="98"/>
        <end position="102"/>
    </location>
</feature>
<feature type="helix" evidence="18">
    <location>
        <begin position="104"/>
        <end position="108"/>
    </location>
</feature>
<feature type="strand" evidence="18">
    <location>
        <begin position="114"/>
        <end position="117"/>
    </location>
</feature>
<feature type="strand" evidence="18">
    <location>
        <begin position="123"/>
        <end position="127"/>
    </location>
</feature>
<feature type="helix" evidence="18">
    <location>
        <begin position="128"/>
        <end position="135"/>
    </location>
</feature>
<feature type="turn" evidence="18">
    <location>
        <begin position="140"/>
        <end position="143"/>
    </location>
</feature>
<feature type="strand" evidence="18">
    <location>
        <begin position="155"/>
        <end position="163"/>
    </location>
</feature>
<feature type="strand" evidence="18">
    <location>
        <begin position="165"/>
        <end position="167"/>
    </location>
</feature>
<feature type="strand" evidence="18">
    <location>
        <begin position="170"/>
        <end position="176"/>
    </location>
</feature>
<feature type="helix" evidence="18">
    <location>
        <begin position="177"/>
        <end position="195"/>
    </location>
</feature>
<feature type="helix" evidence="18">
    <location>
        <begin position="205"/>
        <end position="219"/>
    </location>
</feature>
<feature type="helix" evidence="18">
    <location>
        <begin position="233"/>
        <end position="253"/>
    </location>
</feature>
<feature type="helix" evidence="18">
    <location>
        <begin position="254"/>
        <end position="256"/>
    </location>
</feature>
<feature type="helix" evidence="18">
    <location>
        <begin position="261"/>
        <end position="338"/>
    </location>
</feature>
<feature type="helix" evidence="18">
    <location>
        <begin position="340"/>
        <end position="342"/>
    </location>
</feature>
<feature type="helix" evidence="18">
    <location>
        <begin position="343"/>
        <end position="379"/>
    </location>
</feature>
<feature type="helix" evidence="18">
    <location>
        <begin position="385"/>
        <end position="392"/>
    </location>
</feature>
<feature type="helix" evidence="18">
    <location>
        <begin position="393"/>
        <end position="397"/>
    </location>
</feature>
<feature type="turn" evidence="18">
    <location>
        <begin position="399"/>
        <end position="402"/>
    </location>
</feature>
<feature type="helix" evidence="18">
    <location>
        <begin position="403"/>
        <end position="406"/>
    </location>
</feature>
<feature type="helix" evidence="18">
    <location>
        <begin position="407"/>
        <end position="411"/>
    </location>
</feature>
<feature type="strand" evidence="18">
    <location>
        <begin position="419"/>
        <end position="421"/>
    </location>
</feature>
<feature type="helix" evidence="18">
    <location>
        <begin position="423"/>
        <end position="456"/>
    </location>
</feature>
<feature type="helix" evidence="18">
    <location>
        <begin position="465"/>
        <end position="512"/>
    </location>
</feature>
<feature type="turn" evidence="18">
    <location>
        <begin position="513"/>
        <end position="515"/>
    </location>
</feature>
<feature type="helix" evidence="18">
    <location>
        <begin position="516"/>
        <end position="522"/>
    </location>
</feature>
<feature type="helix" evidence="18">
    <location>
        <begin position="525"/>
        <end position="527"/>
    </location>
</feature>
<feature type="turn" evidence="18">
    <location>
        <begin position="528"/>
        <end position="530"/>
    </location>
</feature>
<feature type="helix" evidence="18">
    <location>
        <begin position="533"/>
        <end position="556"/>
    </location>
</feature>
<feature type="turn" evidence="18">
    <location>
        <begin position="557"/>
        <end position="559"/>
    </location>
</feature>
<accession>Q96TA1</accession>
<accession>Q4LE55</accession>
<accession>Q5VVW6</accession>
<accession>Q5VVW7</accession>
<accession>Q9BUS2</accession>
<accession>Q9NT35</accession>
<dbReference type="EMBL" id="AF151783">
    <property type="protein sequence ID" value="AAK57556.1"/>
    <property type="molecule type" value="mRNA"/>
</dbReference>
<dbReference type="EMBL" id="AF192911">
    <property type="protein sequence ID" value="AAQ13825.1"/>
    <property type="molecule type" value="mRNA"/>
</dbReference>
<dbReference type="EMBL" id="AL445222">
    <property type="status" value="NOT_ANNOTATED_CDS"/>
    <property type="molecule type" value="Genomic_DNA"/>
</dbReference>
<dbReference type="EMBL" id="AL390116">
    <property type="status" value="NOT_ANNOTATED_CDS"/>
    <property type="molecule type" value="Genomic_DNA"/>
</dbReference>
<dbReference type="EMBL" id="CH471090">
    <property type="protein sequence ID" value="EAW87675.1"/>
    <property type="molecule type" value="Genomic_DNA"/>
</dbReference>
<dbReference type="EMBL" id="CH471090">
    <property type="protein sequence ID" value="EAW87677.1"/>
    <property type="molecule type" value="Genomic_DNA"/>
</dbReference>
<dbReference type="EMBL" id="AB210016">
    <property type="protein sequence ID" value="BAE06098.1"/>
    <property type="molecule type" value="mRNA"/>
</dbReference>
<dbReference type="EMBL" id="AL137555">
    <property type="protein sequence ID" value="CAB70809.1"/>
    <property type="molecule type" value="mRNA"/>
</dbReference>
<dbReference type="EMBL" id="BC001979">
    <property type="protein sequence ID" value="AAH01979.2"/>
    <property type="molecule type" value="mRNA"/>
</dbReference>
<dbReference type="CCDS" id="CCDS35144.1">
    <molecule id="Q96TA1-2"/>
</dbReference>
<dbReference type="CCDS" id="CCDS35145.1">
    <molecule id="Q96TA1-1"/>
</dbReference>
<dbReference type="PIR" id="T46394">
    <property type="entry name" value="T46394"/>
</dbReference>
<dbReference type="RefSeq" id="NP_001030611.1">
    <molecule id="Q96TA1-2"/>
    <property type="nucleotide sequence ID" value="NM_001035534.3"/>
</dbReference>
<dbReference type="RefSeq" id="NP_073744.2">
    <molecule id="Q96TA1-1"/>
    <property type="nucleotide sequence ID" value="NM_022833.3"/>
</dbReference>
<dbReference type="PDB" id="7CTP">
    <property type="method" value="X-ray"/>
    <property type="resolution" value="1.80 A"/>
    <property type="chains" value="A=2-560"/>
</dbReference>
<dbReference type="PDBsum" id="7CTP"/>
<dbReference type="SMR" id="Q96TA1"/>
<dbReference type="BioGRID" id="122328">
    <property type="interactions" value="161"/>
</dbReference>
<dbReference type="FunCoup" id="Q96TA1">
    <property type="interactions" value="648"/>
</dbReference>
<dbReference type="IntAct" id="Q96TA1">
    <property type="interactions" value="50"/>
</dbReference>
<dbReference type="MINT" id="Q96TA1"/>
<dbReference type="STRING" id="9606.ENSP00000362409"/>
<dbReference type="GlyGen" id="Q96TA1">
    <property type="glycosylation" value="3 sites, 1 O-linked glycan (2 sites)"/>
</dbReference>
<dbReference type="iPTMnet" id="Q96TA1"/>
<dbReference type="MetOSite" id="Q96TA1"/>
<dbReference type="PhosphoSitePlus" id="Q96TA1"/>
<dbReference type="SwissPalm" id="Q96TA1"/>
<dbReference type="BioMuta" id="FAM129B"/>
<dbReference type="DMDM" id="347595791"/>
<dbReference type="CPTAC" id="CPTAC-75"/>
<dbReference type="CPTAC" id="CPTAC-968"/>
<dbReference type="jPOST" id="Q96TA1"/>
<dbReference type="MassIVE" id="Q96TA1"/>
<dbReference type="PaxDb" id="9606-ENSP00000362409"/>
<dbReference type="PeptideAtlas" id="Q96TA1"/>
<dbReference type="PRIDE" id="Q96TA1"/>
<dbReference type="ProteomicsDB" id="78220">
    <molecule id="Q96TA1-1"/>
</dbReference>
<dbReference type="ProteomicsDB" id="78221">
    <molecule id="Q96TA1-2"/>
</dbReference>
<dbReference type="Pumba" id="Q96TA1"/>
<dbReference type="Antibodypedia" id="17013">
    <property type="antibodies" value="136 antibodies from 29 providers"/>
</dbReference>
<dbReference type="DNASU" id="64855"/>
<dbReference type="Ensembl" id="ENST00000373312.4">
    <molecule id="Q96TA1-1"/>
    <property type="protein sequence ID" value="ENSP00000362409.3"/>
    <property type="gene ID" value="ENSG00000136830.12"/>
</dbReference>
<dbReference type="Ensembl" id="ENST00000373314.7">
    <molecule id="Q96TA1-2"/>
    <property type="protein sequence ID" value="ENSP00000362411.3"/>
    <property type="gene ID" value="ENSG00000136830.12"/>
</dbReference>
<dbReference type="GeneID" id="64855"/>
<dbReference type="KEGG" id="hsa:64855"/>
<dbReference type="MANE-Select" id="ENST00000373312.4">
    <property type="protein sequence ID" value="ENSP00000362409.3"/>
    <property type="RefSeq nucleotide sequence ID" value="NM_022833.4"/>
    <property type="RefSeq protein sequence ID" value="NP_073744.2"/>
</dbReference>
<dbReference type="UCSC" id="uc004brh.5">
    <molecule id="Q96TA1-1"/>
    <property type="organism name" value="human"/>
</dbReference>
<dbReference type="AGR" id="HGNC:25282"/>
<dbReference type="CTD" id="64855"/>
<dbReference type="DisGeNET" id="64855"/>
<dbReference type="GeneCards" id="NIBAN2"/>
<dbReference type="HGNC" id="HGNC:25282">
    <property type="gene designation" value="NIBAN2"/>
</dbReference>
<dbReference type="HPA" id="ENSG00000136830">
    <property type="expression patterns" value="Tissue enhanced (esophagus)"/>
</dbReference>
<dbReference type="MIM" id="614045">
    <property type="type" value="gene"/>
</dbReference>
<dbReference type="neXtProt" id="NX_Q96TA1"/>
<dbReference type="OpenTargets" id="ENSG00000136830"/>
<dbReference type="PharmGKB" id="PA162385984"/>
<dbReference type="VEuPathDB" id="HostDB:ENSG00000136830"/>
<dbReference type="eggNOG" id="ENOG502QV2S">
    <property type="taxonomic scope" value="Eukaryota"/>
</dbReference>
<dbReference type="GeneTree" id="ENSGT00940000154149"/>
<dbReference type="HOGENOM" id="CLU_009718_1_1_1"/>
<dbReference type="InParanoid" id="Q96TA1"/>
<dbReference type="OMA" id="GTPIDWG"/>
<dbReference type="OrthoDB" id="9010513at2759"/>
<dbReference type="PAN-GO" id="Q96TA1">
    <property type="GO annotations" value="0 GO annotations based on evolutionary models"/>
</dbReference>
<dbReference type="PhylomeDB" id="Q96TA1"/>
<dbReference type="TreeFam" id="TF333351"/>
<dbReference type="PathwayCommons" id="Q96TA1"/>
<dbReference type="SignaLink" id="Q96TA1"/>
<dbReference type="SIGNOR" id="Q96TA1"/>
<dbReference type="BioGRID-ORCS" id="64855">
    <property type="hits" value="26 hits in 1164 CRISPR screens"/>
</dbReference>
<dbReference type="ChiTaRS" id="FAM129B">
    <property type="organism name" value="human"/>
</dbReference>
<dbReference type="GenomeRNAi" id="64855"/>
<dbReference type="Pharos" id="Q96TA1">
    <property type="development level" value="Tbio"/>
</dbReference>
<dbReference type="PRO" id="PR:Q96TA1"/>
<dbReference type="Proteomes" id="UP000005640">
    <property type="component" value="Chromosome 9"/>
</dbReference>
<dbReference type="RNAct" id="Q96TA1">
    <property type="molecule type" value="protein"/>
</dbReference>
<dbReference type="Bgee" id="ENSG00000136830">
    <property type="expression patterns" value="Expressed in pancreatic ductal cell and 179 other cell types or tissues"/>
</dbReference>
<dbReference type="ExpressionAtlas" id="Q96TA1">
    <property type="expression patterns" value="baseline and differential"/>
</dbReference>
<dbReference type="GO" id="GO:0005912">
    <property type="term" value="C:adherens junction"/>
    <property type="evidence" value="ECO:0000314"/>
    <property type="project" value="UniProtKB"/>
</dbReference>
<dbReference type="GO" id="GO:0005737">
    <property type="term" value="C:cytoplasm"/>
    <property type="evidence" value="ECO:0000314"/>
    <property type="project" value="UniProtKB"/>
</dbReference>
<dbReference type="GO" id="GO:0005829">
    <property type="term" value="C:cytosol"/>
    <property type="evidence" value="ECO:0000314"/>
    <property type="project" value="HPA"/>
</dbReference>
<dbReference type="GO" id="GO:0070062">
    <property type="term" value="C:extracellular exosome"/>
    <property type="evidence" value="ECO:0007005"/>
    <property type="project" value="UniProtKB"/>
</dbReference>
<dbReference type="GO" id="GO:0005654">
    <property type="term" value="C:nucleoplasm"/>
    <property type="evidence" value="ECO:0000314"/>
    <property type="project" value="HPA"/>
</dbReference>
<dbReference type="GO" id="GO:0005634">
    <property type="term" value="C:nucleus"/>
    <property type="evidence" value="ECO:0000314"/>
    <property type="project" value="UniProtKB"/>
</dbReference>
<dbReference type="GO" id="GO:0005886">
    <property type="term" value="C:plasma membrane"/>
    <property type="evidence" value="ECO:0000314"/>
    <property type="project" value="HPA"/>
</dbReference>
<dbReference type="GO" id="GO:0045296">
    <property type="term" value="F:cadherin binding"/>
    <property type="evidence" value="ECO:0007005"/>
    <property type="project" value="BHF-UCL"/>
</dbReference>
<dbReference type="GO" id="GO:0003713">
    <property type="term" value="F:transcription coactivator activity"/>
    <property type="evidence" value="ECO:0000314"/>
    <property type="project" value="UniProtKB"/>
</dbReference>
<dbReference type="GO" id="GO:0032274">
    <property type="term" value="P:gonadotropin secretion"/>
    <property type="evidence" value="ECO:0000315"/>
    <property type="project" value="UniProtKB"/>
</dbReference>
<dbReference type="GO" id="GO:0043066">
    <property type="term" value="P:negative regulation of apoptotic process"/>
    <property type="evidence" value="ECO:0000315"/>
    <property type="project" value="UniProtKB"/>
</dbReference>
<dbReference type="GO" id="GO:0008285">
    <property type="term" value="P:negative regulation of cell population proliferation"/>
    <property type="evidence" value="ECO:0000314"/>
    <property type="project" value="UniProtKB"/>
</dbReference>
<dbReference type="GO" id="GO:2000279">
    <property type="term" value="P:negative regulation of DNA biosynthetic process"/>
    <property type="evidence" value="ECO:0000314"/>
    <property type="project" value="UniProtKB"/>
</dbReference>
<dbReference type="GO" id="GO:0045892">
    <property type="term" value="P:negative regulation of DNA-templated transcription"/>
    <property type="evidence" value="ECO:0000314"/>
    <property type="project" value="UniProtKB"/>
</dbReference>
<dbReference type="GO" id="GO:0045893">
    <property type="term" value="P:positive regulation of DNA-templated transcription"/>
    <property type="evidence" value="ECO:0000314"/>
    <property type="project" value="UniProtKB"/>
</dbReference>
<dbReference type="GO" id="GO:2000679">
    <property type="term" value="P:positive regulation of transcription regulatory region DNA binding"/>
    <property type="evidence" value="ECO:0000314"/>
    <property type="project" value="UniProtKB"/>
</dbReference>
<dbReference type="CDD" id="cd23949">
    <property type="entry name" value="Niban-like"/>
    <property type="match status" value="1"/>
</dbReference>
<dbReference type="FunFam" id="2.30.29.30:FF:000255">
    <property type="entry name" value="niban-like protein 1 isoform X1"/>
    <property type="match status" value="1"/>
</dbReference>
<dbReference type="Gene3D" id="2.30.29.30">
    <property type="entry name" value="Pleckstrin-homology domain (PH domain)/Phosphotyrosine-binding domain (PTB)"/>
    <property type="match status" value="1"/>
</dbReference>
<dbReference type="InterPro" id="IPR026088">
    <property type="entry name" value="Niban-like"/>
</dbReference>
<dbReference type="InterPro" id="IPR011993">
    <property type="entry name" value="PH-like_dom_sf"/>
</dbReference>
<dbReference type="InterPro" id="IPR001849">
    <property type="entry name" value="PH_domain"/>
</dbReference>
<dbReference type="PANTHER" id="PTHR14392">
    <property type="entry name" value="NIBAN FAMILY MEMBER"/>
    <property type="match status" value="1"/>
</dbReference>
<dbReference type="PANTHER" id="PTHR14392:SF2">
    <property type="entry name" value="PROTEIN NIBAN 2"/>
    <property type="match status" value="1"/>
</dbReference>
<dbReference type="SUPFAM" id="SSF50729">
    <property type="entry name" value="PH domain-like"/>
    <property type="match status" value="1"/>
</dbReference>
<dbReference type="PROSITE" id="PS50003">
    <property type="entry name" value="PH_DOMAIN"/>
    <property type="match status" value="1"/>
</dbReference>
<keyword id="KW-0002">3D-structure</keyword>
<keyword id="KW-0025">Alternative splicing</keyword>
<keyword id="KW-0965">Cell junction</keyword>
<keyword id="KW-0963">Cytoplasm</keyword>
<keyword id="KW-0903">Direct protein sequencing</keyword>
<keyword id="KW-0449">Lipoprotein</keyword>
<keyword id="KW-0472">Membrane</keyword>
<keyword id="KW-0519">Myristate</keyword>
<keyword id="KW-0597">Phosphoprotein</keyword>
<keyword id="KW-1267">Proteomics identification</keyword>
<keyword id="KW-1185">Reference proteome</keyword>
<gene>
    <name evidence="10" type="primary">NIBAN2</name>
    <name type="synonym">C9orf88</name>
    <name evidence="7" type="synonym">FAM129B</name>
</gene>
<evidence type="ECO:0000255" key="1">
    <source>
        <dbReference type="PROSITE-ProRule" id="PRU00145"/>
    </source>
</evidence>
<evidence type="ECO:0000256" key="2">
    <source>
        <dbReference type="SAM" id="MobiDB-lite"/>
    </source>
</evidence>
<evidence type="ECO:0000269" key="3">
    <source>
    </source>
</evidence>
<evidence type="ECO:0000269" key="4">
    <source>
    </source>
</evidence>
<evidence type="ECO:0000269" key="5">
    <source>
    </source>
</evidence>
<evidence type="ECO:0000269" key="6">
    <source>
    </source>
</evidence>
<evidence type="ECO:0000303" key="7">
    <source>
    </source>
</evidence>
<evidence type="ECO:0000303" key="8">
    <source ref="1"/>
</evidence>
<evidence type="ECO:0000305" key="9"/>
<evidence type="ECO:0000312" key="10">
    <source>
        <dbReference type="HGNC" id="HGNC:25282"/>
    </source>
</evidence>
<evidence type="ECO:0007744" key="11">
    <source>
    </source>
</evidence>
<evidence type="ECO:0007744" key="12">
    <source>
    </source>
</evidence>
<evidence type="ECO:0007744" key="13">
    <source>
    </source>
</evidence>
<evidence type="ECO:0007744" key="14">
    <source>
    </source>
</evidence>
<evidence type="ECO:0007744" key="15">
    <source>
    </source>
</evidence>
<evidence type="ECO:0007744" key="16">
    <source>
    </source>
</evidence>
<evidence type="ECO:0007744" key="17">
    <source>
    </source>
</evidence>
<evidence type="ECO:0007829" key="18">
    <source>
        <dbReference type="PDB" id="7CTP"/>
    </source>
</evidence>
<organism>
    <name type="scientific">Homo sapiens</name>
    <name type="common">Human</name>
    <dbReference type="NCBI Taxonomy" id="9606"/>
    <lineage>
        <taxon>Eukaryota</taxon>
        <taxon>Metazoa</taxon>
        <taxon>Chordata</taxon>
        <taxon>Craniata</taxon>
        <taxon>Vertebrata</taxon>
        <taxon>Euteleostomi</taxon>
        <taxon>Mammalia</taxon>
        <taxon>Eutheria</taxon>
        <taxon>Euarchontoglires</taxon>
        <taxon>Primates</taxon>
        <taxon>Haplorrhini</taxon>
        <taxon>Catarrhini</taxon>
        <taxon>Hominidae</taxon>
        <taxon>Homo</taxon>
    </lineage>
</organism>